<dbReference type="EC" id="3.1.-.-" evidence="1"/>
<dbReference type="EMBL" id="CP000239">
    <property type="protein sequence ID" value="ABC98920.1"/>
    <property type="molecule type" value="Genomic_DNA"/>
</dbReference>
<dbReference type="SMR" id="Q2JWE3"/>
<dbReference type="STRING" id="321327.CYA_0707"/>
<dbReference type="KEGG" id="cya:CYA_0707"/>
<dbReference type="eggNOG" id="COG0816">
    <property type="taxonomic scope" value="Bacteria"/>
</dbReference>
<dbReference type="HOGENOM" id="CLU_098240_3_1_3"/>
<dbReference type="OrthoDB" id="9796140at2"/>
<dbReference type="Proteomes" id="UP000008818">
    <property type="component" value="Chromosome"/>
</dbReference>
<dbReference type="GO" id="GO:0005829">
    <property type="term" value="C:cytosol"/>
    <property type="evidence" value="ECO:0007669"/>
    <property type="project" value="TreeGrafter"/>
</dbReference>
<dbReference type="GO" id="GO:0004518">
    <property type="term" value="F:nuclease activity"/>
    <property type="evidence" value="ECO:0007669"/>
    <property type="project" value="UniProtKB-KW"/>
</dbReference>
<dbReference type="GO" id="GO:0000967">
    <property type="term" value="P:rRNA 5'-end processing"/>
    <property type="evidence" value="ECO:0007669"/>
    <property type="project" value="UniProtKB-UniRule"/>
</dbReference>
<dbReference type="CDD" id="cd16964">
    <property type="entry name" value="YqgF"/>
    <property type="match status" value="1"/>
</dbReference>
<dbReference type="Gene3D" id="3.30.420.140">
    <property type="entry name" value="YqgF/RNase H-like domain"/>
    <property type="match status" value="1"/>
</dbReference>
<dbReference type="HAMAP" id="MF_00651">
    <property type="entry name" value="Nuclease_YqgF"/>
    <property type="match status" value="1"/>
</dbReference>
<dbReference type="InterPro" id="IPR012337">
    <property type="entry name" value="RNaseH-like_sf"/>
</dbReference>
<dbReference type="InterPro" id="IPR005227">
    <property type="entry name" value="YqgF"/>
</dbReference>
<dbReference type="InterPro" id="IPR006641">
    <property type="entry name" value="YqgF/RNaseH-like_dom"/>
</dbReference>
<dbReference type="InterPro" id="IPR037027">
    <property type="entry name" value="YqgF/RNaseH-like_dom_sf"/>
</dbReference>
<dbReference type="NCBIfam" id="TIGR00250">
    <property type="entry name" value="RNAse_H_YqgF"/>
    <property type="match status" value="1"/>
</dbReference>
<dbReference type="PANTHER" id="PTHR33317">
    <property type="entry name" value="POLYNUCLEOTIDYL TRANSFERASE, RIBONUCLEASE H-LIKE SUPERFAMILY PROTEIN"/>
    <property type="match status" value="1"/>
</dbReference>
<dbReference type="PANTHER" id="PTHR33317:SF4">
    <property type="entry name" value="POLYNUCLEOTIDYL TRANSFERASE, RIBONUCLEASE H-LIKE SUPERFAMILY PROTEIN"/>
    <property type="match status" value="1"/>
</dbReference>
<dbReference type="Pfam" id="PF03652">
    <property type="entry name" value="RuvX"/>
    <property type="match status" value="1"/>
</dbReference>
<dbReference type="SMART" id="SM00732">
    <property type="entry name" value="YqgFc"/>
    <property type="match status" value="1"/>
</dbReference>
<dbReference type="SUPFAM" id="SSF53098">
    <property type="entry name" value="Ribonuclease H-like"/>
    <property type="match status" value="1"/>
</dbReference>
<reference key="1">
    <citation type="journal article" date="2007" name="ISME J.">
        <title>Population level functional diversity in a microbial community revealed by comparative genomic and metagenomic analyses.</title>
        <authorList>
            <person name="Bhaya D."/>
            <person name="Grossman A.R."/>
            <person name="Steunou A.-S."/>
            <person name="Khuri N."/>
            <person name="Cohan F.M."/>
            <person name="Hamamura N."/>
            <person name="Melendrez M.C."/>
            <person name="Bateson M.M."/>
            <person name="Ward D.M."/>
            <person name="Heidelberg J.F."/>
        </authorList>
    </citation>
    <scope>NUCLEOTIDE SEQUENCE [LARGE SCALE GENOMIC DNA]</scope>
    <source>
        <strain>JA-3-3Ab</strain>
    </source>
</reference>
<name>YQGF_SYNJA</name>
<organism>
    <name type="scientific">Synechococcus sp. (strain JA-3-3Ab)</name>
    <name type="common">Cyanobacteria bacterium Yellowstone A-Prime</name>
    <dbReference type="NCBI Taxonomy" id="321327"/>
    <lineage>
        <taxon>Bacteria</taxon>
        <taxon>Bacillati</taxon>
        <taxon>Cyanobacteriota</taxon>
        <taxon>Cyanophyceae</taxon>
        <taxon>Synechococcales</taxon>
        <taxon>Synechococcaceae</taxon>
        <taxon>Synechococcus</taxon>
    </lineage>
</organism>
<sequence length="159" mass="17238">MSTDLNYSATRDPFSALGLDVGNRRIGVAGSDGLGLLATGLGVIRRRSLPEDIAQVQAWIRRRQATVVVVGIPLLADGSVGSQARKVQRFVRALQAAVDLPVVTVNEYLSTVQAEWDLRQAGIPAKAQKALIDQQSAAVILQTWLDERRYSQSSKAPCR</sequence>
<accession>Q2JWE3</accession>
<keyword id="KW-0963">Cytoplasm</keyword>
<keyword id="KW-0378">Hydrolase</keyword>
<keyword id="KW-0540">Nuclease</keyword>
<keyword id="KW-0690">Ribosome biogenesis</keyword>
<feature type="chain" id="PRO_0000257608" description="Putative pre-16S rRNA nuclease">
    <location>
        <begin position="1"/>
        <end position="159"/>
    </location>
</feature>
<proteinExistence type="inferred from homology"/>
<comment type="function">
    <text evidence="1">Could be a nuclease involved in processing of the 5'-end of pre-16S rRNA.</text>
</comment>
<comment type="subcellular location">
    <subcellularLocation>
        <location evidence="1">Cytoplasm</location>
    </subcellularLocation>
</comment>
<comment type="similarity">
    <text evidence="1">Belongs to the YqgF nuclease family.</text>
</comment>
<evidence type="ECO:0000255" key="1">
    <source>
        <dbReference type="HAMAP-Rule" id="MF_00651"/>
    </source>
</evidence>
<protein>
    <recommendedName>
        <fullName evidence="1">Putative pre-16S rRNA nuclease</fullName>
        <ecNumber evidence="1">3.1.-.-</ecNumber>
    </recommendedName>
</protein>
<gene>
    <name type="ordered locus">CYA_0707</name>
</gene>